<protein>
    <recommendedName>
        <fullName evidence="1">Spermidine export protein MdtJ</fullName>
    </recommendedName>
</protein>
<accession>Q8XEK5</accession>
<accession>Q7AMY5</accession>
<gene>
    <name evidence="1" type="primary">mdtJ</name>
    <name type="ordered locus">STY1585</name>
    <name type="ordered locus">t1402</name>
</gene>
<proteinExistence type="inferred from homology"/>
<comment type="function">
    <text evidence="1">Catalyzes the excretion of spermidine.</text>
</comment>
<comment type="subunit">
    <text evidence="1">Forms a complex with MdtI.</text>
</comment>
<comment type="subcellular location">
    <subcellularLocation>
        <location evidence="1">Cell inner membrane</location>
        <topology evidence="1">Multi-pass membrane protein</topology>
    </subcellularLocation>
</comment>
<comment type="similarity">
    <text evidence="1">Belongs to the drug/metabolite transporter (DMT) superfamily. Small multidrug resistance (SMR) (TC 2.A.7.1) family. MdtJ subfamily.</text>
</comment>
<name>MDTJ_SALTI</name>
<sequence length="120" mass="12915">MFYWILLALAIATEITGTLSMKWASVGNGNAGFILMLVMITLSYIFLSFAVKKIALGVAYALWEGIGILFITIFSVLLFDEALSTMKIAGLLTLVAGIVLIKSGTRKPGKPVKEATRATI</sequence>
<keyword id="KW-0997">Cell inner membrane</keyword>
<keyword id="KW-1003">Cell membrane</keyword>
<keyword id="KW-0472">Membrane</keyword>
<keyword id="KW-0812">Transmembrane</keyword>
<keyword id="KW-1133">Transmembrane helix</keyword>
<keyword id="KW-0813">Transport</keyword>
<feature type="chain" id="PRO_0000331177" description="Spermidine export protein MdtJ">
    <location>
        <begin position="1"/>
        <end position="120"/>
    </location>
</feature>
<feature type="transmembrane region" description="Helical" evidence="1">
    <location>
        <begin position="1"/>
        <end position="21"/>
    </location>
</feature>
<feature type="transmembrane region" description="Helical" evidence="1">
    <location>
        <begin position="31"/>
        <end position="51"/>
    </location>
</feature>
<feature type="transmembrane region" description="Helical" evidence="1">
    <location>
        <begin position="54"/>
        <end position="74"/>
    </location>
</feature>
<feature type="transmembrane region" description="Helical" evidence="1">
    <location>
        <begin position="81"/>
        <end position="101"/>
    </location>
</feature>
<dbReference type="EMBL" id="AE014613">
    <property type="protein sequence ID" value="AAO69046.1"/>
    <property type="molecule type" value="Genomic_DNA"/>
</dbReference>
<dbReference type="EMBL" id="AL513382">
    <property type="protein sequence ID" value="CAD01832.1"/>
    <property type="molecule type" value="Genomic_DNA"/>
</dbReference>
<dbReference type="RefSeq" id="NP_455998.1">
    <property type="nucleotide sequence ID" value="NC_003198.1"/>
</dbReference>
<dbReference type="RefSeq" id="WP_000500278.1">
    <property type="nucleotide sequence ID" value="NZ_WSUR01000040.1"/>
</dbReference>
<dbReference type="SMR" id="Q8XEK5"/>
<dbReference type="STRING" id="220341.gene:17585522"/>
<dbReference type="KEGG" id="stt:t1402"/>
<dbReference type="KEGG" id="sty:STY1585"/>
<dbReference type="PATRIC" id="fig|220341.7.peg.1593"/>
<dbReference type="eggNOG" id="COG2076">
    <property type="taxonomic scope" value="Bacteria"/>
</dbReference>
<dbReference type="HOGENOM" id="CLU_133067_0_0_6"/>
<dbReference type="OMA" id="MRSWIYL"/>
<dbReference type="OrthoDB" id="9808638at2"/>
<dbReference type="Proteomes" id="UP000000541">
    <property type="component" value="Chromosome"/>
</dbReference>
<dbReference type="Proteomes" id="UP000002670">
    <property type="component" value="Chromosome"/>
</dbReference>
<dbReference type="GO" id="GO:0005886">
    <property type="term" value="C:plasma membrane"/>
    <property type="evidence" value="ECO:0007669"/>
    <property type="project" value="UniProtKB-SubCell"/>
</dbReference>
<dbReference type="GO" id="GO:0015199">
    <property type="term" value="F:amino-acid betaine transmembrane transporter activity"/>
    <property type="evidence" value="ECO:0007669"/>
    <property type="project" value="TreeGrafter"/>
</dbReference>
<dbReference type="GO" id="GO:0015297">
    <property type="term" value="F:antiporter activity"/>
    <property type="evidence" value="ECO:0007669"/>
    <property type="project" value="TreeGrafter"/>
</dbReference>
<dbReference type="GO" id="GO:0015220">
    <property type="term" value="F:choline transmembrane transporter activity"/>
    <property type="evidence" value="ECO:0007669"/>
    <property type="project" value="TreeGrafter"/>
</dbReference>
<dbReference type="GO" id="GO:0015606">
    <property type="term" value="F:spermidine transmembrane transporter activity"/>
    <property type="evidence" value="ECO:0007669"/>
    <property type="project" value="UniProtKB-UniRule"/>
</dbReference>
<dbReference type="GO" id="GO:0031460">
    <property type="term" value="P:glycine betaine transport"/>
    <property type="evidence" value="ECO:0007669"/>
    <property type="project" value="TreeGrafter"/>
</dbReference>
<dbReference type="FunFam" id="1.10.3730.20:FF:000001">
    <property type="entry name" value="Quaternary ammonium compound resistance transporter SugE"/>
    <property type="match status" value="1"/>
</dbReference>
<dbReference type="Gene3D" id="1.10.3730.20">
    <property type="match status" value="1"/>
</dbReference>
<dbReference type="HAMAP" id="MF_01598">
    <property type="entry name" value="MdtJ"/>
    <property type="match status" value="1"/>
</dbReference>
<dbReference type="InterPro" id="IPR000390">
    <property type="entry name" value="Small_drug/metabolite_transptr"/>
</dbReference>
<dbReference type="InterPro" id="IPR045324">
    <property type="entry name" value="Small_multidrug_res"/>
</dbReference>
<dbReference type="InterPro" id="IPR023740">
    <property type="entry name" value="Spermidine_export_MdtJ"/>
</dbReference>
<dbReference type="NCBIfam" id="NF007767">
    <property type="entry name" value="PRK10452.1"/>
    <property type="match status" value="1"/>
</dbReference>
<dbReference type="PANTHER" id="PTHR30561">
    <property type="entry name" value="SMR FAMILY PROTON-DEPENDENT DRUG EFFLUX TRANSPORTER SUGE"/>
    <property type="match status" value="1"/>
</dbReference>
<dbReference type="PANTHER" id="PTHR30561:SF2">
    <property type="entry name" value="SPERMIDINE EXPORT PROTEIN MDTJ"/>
    <property type="match status" value="1"/>
</dbReference>
<dbReference type="Pfam" id="PF00893">
    <property type="entry name" value="Multi_Drug_Res"/>
    <property type="match status" value="1"/>
</dbReference>
<dbReference type="SUPFAM" id="SSF103481">
    <property type="entry name" value="Multidrug resistance efflux transporter EmrE"/>
    <property type="match status" value="1"/>
</dbReference>
<reference key="1">
    <citation type="journal article" date="2003" name="J. Bacteriol.">
        <title>Comparative genomics of Salmonella enterica serovar Typhi strains Ty2 and CT18.</title>
        <authorList>
            <person name="Deng W."/>
            <person name="Liou S.-R."/>
            <person name="Plunkett G. III"/>
            <person name="Mayhew G.F."/>
            <person name="Rose D.J."/>
            <person name="Burland V."/>
            <person name="Kodoyianni V."/>
            <person name="Schwartz D.C."/>
            <person name="Blattner F.R."/>
        </authorList>
    </citation>
    <scope>NUCLEOTIDE SEQUENCE [LARGE SCALE GENOMIC DNA]</scope>
    <source>
        <strain>ATCC 700931 / Ty2</strain>
    </source>
</reference>
<reference key="2">
    <citation type="journal article" date="2001" name="Nature">
        <title>Complete genome sequence of a multiple drug resistant Salmonella enterica serovar Typhi CT18.</title>
        <authorList>
            <person name="Parkhill J."/>
            <person name="Dougan G."/>
            <person name="James K.D."/>
            <person name="Thomson N.R."/>
            <person name="Pickard D."/>
            <person name="Wain J."/>
            <person name="Churcher C.M."/>
            <person name="Mungall K.L."/>
            <person name="Bentley S.D."/>
            <person name="Holden M.T.G."/>
            <person name="Sebaihia M."/>
            <person name="Baker S."/>
            <person name="Basham D."/>
            <person name="Brooks K."/>
            <person name="Chillingworth T."/>
            <person name="Connerton P."/>
            <person name="Cronin A."/>
            <person name="Davis P."/>
            <person name="Davies R.M."/>
            <person name="Dowd L."/>
            <person name="White N."/>
            <person name="Farrar J."/>
            <person name="Feltwell T."/>
            <person name="Hamlin N."/>
            <person name="Haque A."/>
            <person name="Hien T.T."/>
            <person name="Holroyd S."/>
            <person name="Jagels K."/>
            <person name="Krogh A."/>
            <person name="Larsen T.S."/>
            <person name="Leather S."/>
            <person name="Moule S."/>
            <person name="O'Gaora P."/>
            <person name="Parry C."/>
            <person name="Quail M.A."/>
            <person name="Rutherford K.M."/>
            <person name="Simmonds M."/>
            <person name="Skelton J."/>
            <person name="Stevens K."/>
            <person name="Whitehead S."/>
            <person name="Barrell B.G."/>
        </authorList>
    </citation>
    <scope>NUCLEOTIDE SEQUENCE [LARGE SCALE GENOMIC DNA]</scope>
    <source>
        <strain>CT18</strain>
    </source>
</reference>
<evidence type="ECO:0000255" key="1">
    <source>
        <dbReference type="HAMAP-Rule" id="MF_01598"/>
    </source>
</evidence>
<organism>
    <name type="scientific">Salmonella typhi</name>
    <dbReference type="NCBI Taxonomy" id="90370"/>
    <lineage>
        <taxon>Bacteria</taxon>
        <taxon>Pseudomonadati</taxon>
        <taxon>Pseudomonadota</taxon>
        <taxon>Gammaproteobacteria</taxon>
        <taxon>Enterobacterales</taxon>
        <taxon>Enterobacteriaceae</taxon>
        <taxon>Salmonella</taxon>
    </lineage>
</organism>